<evidence type="ECO:0000250" key="1"/>
<evidence type="ECO:0000305" key="2"/>
<proteinExistence type="evidence at transcript level"/>
<reference key="1">
    <citation type="journal article" date="2005" name="Science">
        <title>The transcriptional landscape of the mammalian genome.</title>
        <authorList>
            <person name="Carninci P."/>
            <person name="Kasukawa T."/>
            <person name="Katayama S."/>
            <person name="Gough J."/>
            <person name="Frith M.C."/>
            <person name="Maeda N."/>
            <person name="Oyama R."/>
            <person name="Ravasi T."/>
            <person name="Lenhard B."/>
            <person name="Wells C."/>
            <person name="Kodzius R."/>
            <person name="Shimokawa K."/>
            <person name="Bajic V.B."/>
            <person name="Brenner S.E."/>
            <person name="Batalov S."/>
            <person name="Forrest A.R."/>
            <person name="Zavolan M."/>
            <person name="Davis M.J."/>
            <person name="Wilming L.G."/>
            <person name="Aidinis V."/>
            <person name="Allen J.E."/>
            <person name="Ambesi-Impiombato A."/>
            <person name="Apweiler R."/>
            <person name="Aturaliya R.N."/>
            <person name="Bailey T.L."/>
            <person name="Bansal M."/>
            <person name="Baxter L."/>
            <person name="Beisel K.W."/>
            <person name="Bersano T."/>
            <person name="Bono H."/>
            <person name="Chalk A.M."/>
            <person name="Chiu K.P."/>
            <person name="Choudhary V."/>
            <person name="Christoffels A."/>
            <person name="Clutterbuck D.R."/>
            <person name="Crowe M.L."/>
            <person name="Dalla E."/>
            <person name="Dalrymple B.P."/>
            <person name="de Bono B."/>
            <person name="Della Gatta G."/>
            <person name="di Bernardo D."/>
            <person name="Down T."/>
            <person name="Engstrom P."/>
            <person name="Fagiolini M."/>
            <person name="Faulkner G."/>
            <person name="Fletcher C.F."/>
            <person name="Fukushima T."/>
            <person name="Furuno M."/>
            <person name="Futaki S."/>
            <person name="Gariboldi M."/>
            <person name="Georgii-Hemming P."/>
            <person name="Gingeras T.R."/>
            <person name="Gojobori T."/>
            <person name="Green R.E."/>
            <person name="Gustincich S."/>
            <person name="Harbers M."/>
            <person name="Hayashi Y."/>
            <person name="Hensch T.K."/>
            <person name="Hirokawa N."/>
            <person name="Hill D."/>
            <person name="Huminiecki L."/>
            <person name="Iacono M."/>
            <person name="Ikeo K."/>
            <person name="Iwama A."/>
            <person name="Ishikawa T."/>
            <person name="Jakt M."/>
            <person name="Kanapin A."/>
            <person name="Katoh M."/>
            <person name="Kawasawa Y."/>
            <person name="Kelso J."/>
            <person name="Kitamura H."/>
            <person name="Kitano H."/>
            <person name="Kollias G."/>
            <person name="Krishnan S.P."/>
            <person name="Kruger A."/>
            <person name="Kummerfeld S.K."/>
            <person name="Kurochkin I.V."/>
            <person name="Lareau L.F."/>
            <person name="Lazarevic D."/>
            <person name="Lipovich L."/>
            <person name="Liu J."/>
            <person name="Liuni S."/>
            <person name="McWilliam S."/>
            <person name="Madan Babu M."/>
            <person name="Madera M."/>
            <person name="Marchionni L."/>
            <person name="Matsuda H."/>
            <person name="Matsuzawa S."/>
            <person name="Miki H."/>
            <person name="Mignone F."/>
            <person name="Miyake S."/>
            <person name="Morris K."/>
            <person name="Mottagui-Tabar S."/>
            <person name="Mulder N."/>
            <person name="Nakano N."/>
            <person name="Nakauchi H."/>
            <person name="Ng P."/>
            <person name="Nilsson R."/>
            <person name="Nishiguchi S."/>
            <person name="Nishikawa S."/>
            <person name="Nori F."/>
            <person name="Ohara O."/>
            <person name="Okazaki Y."/>
            <person name="Orlando V."/>
            <person name="Pang K.C."/>
            <person name="Pavan W.J."/>
            <person name="Pavesi G."/>
            <person name="Pesole G."/>
            <person name="Petrovsky N."/>
            <person name="Piazza S."/>
            <person name="Reed J."/>
            <person name="Reid J.F."/>
            <person name="Ring B.Z."/>
            <person name="Ringwald M."/>
            <person name="Rost B."/>
            <person name="Ruan Y."/>
            <person name="Salzberg S.L."/>
            <person name="Sandelin A."/>
            <person name="Schneider C."/>
            <person name="Schoenbach C."/>
            <person name="Sekiguchi K."/>
            <person name="Semple C.A."/>
            <person name="Seno S."/>
            <person name="Sessa L."/>
            <person name="Sheng Y."/>
            <person name="Shibata Y."/>
            <person name="Shimada H."/>
            <person name="Shimada K."/>
            <person name="Silva D."/>
            <person name="Sinclair B."/>
            <person name="Sperling S."/>
            <person name="Stupka E."/>
            <person name="Sugiura K."/>
            <person name="Sultana R."/>
            <person name="Takenaka Y."/>
            <person name="Taki K."/>
            <person name="Tammoja K."/>
            <person name="Tan S.L."/>
            <person name="Tang S."/>
            <person name="Taylor M.S."/>
            <person name="Tegner J."/>
            <person name="Teichmann S.A."/>
            <person name="Ueda H.R."/>
            <person name="van Nimwegen E."/>
            <person name="Verardo R."/>
            <person name="Wei C.L."/>
            <person name="Yagi K."/>
            <person name="Yamanishi H."/>
            <person name="Zabarovsky E."/>
            <person name="Zhu S."/>
            <person name="Zimmer A."/>
            <person name="Hide W."/>
            <person name="Bult C."/>
            <person name="Grimmond S.M."/>
            <person name="Teasdale R.D."/>
            <person name="Liu E.T."/>
            <person name="Brusic V."/>
            <person name="Quackenbush J."/>
            <person name="Wahlestedt C."/>
            <person name="Mattick J.S."/>
            <person name="Hume D.A."/>
            <person name="Kai C."/>
            <person name="Sasaki D."/>
            <person name="Tomaru Y."/>
            <person name="Fukuda S."/>
            <person name="Kanamori-Katayama M."/>
            <person name="Suzuki M."/>
            <person name="Aoki J."/>
            <person name="Arakawa T."/>
            <person name="Iida J."/>
            <person name="Imamura K."/>
            <person name="Itoh M."/>
            <person name="Kato T."/>
            <person name="Kawaji H."/>
            <person name="Kawagashira N."/>
            <person name="Kawashima T."/>
            <person name="Kojima M."/>
            <person name="Kondo S."/>
            <person name="Konno H."/>
            <person name="Nakano K."/>
            <person name="Ninomiya N."/>
            <person name="Nishio T."/>
            <person name="Okada M."/>
            <person name="Plessy C."/>
            <person name="Shibata K."/>
            <person name="Shiraki T."/>
            <person name="Suzuki S."/>
            <person name="Tagami M."/>
            <person name="Waki K."/>
            <person name="Watahiki A."/>
            <person name="Okamura-Oho Y."/>
            <person name="Suzuki H."/>
            <person name="Kawai J."/>
            <person name="Hayashizaki Y."/>
        </authorList>
    </citation>
    <scope>NUCLEOTIDE SEQUENCE [LARGE SCALE MRNA]</scope>
    <source>
        <strain>C57BL/6J</strain>
        <tissue>Stomach</tissue>
    </source>
</reference>
<reference key="2">
    <citation type="journal article" date="2009" name="PLoS Biol.">
        <title>Lineage-specific biology revealed by a finished genome assembly of the mouse.</title>
        <authorList>
            <person name="Church D.M."/>
            <person name="Goodstadt L."/>
            <person name="Hillier L.W."/>
            <person name="Zody M.C."/>
            <person name="Goldstein S."/>
            <person name="She X."/>
            <person name="Bult C.J."/>
            <person name="Agarwala R."/>
            <person name="Cherry J.L."/>
            <person name="DiCuccio M."/>
            <person name="Hlavina W."/>
            <person name="Kapustin Y."/>
            <person name="Meric P."/>
            <person name="Maglott D."/>
            <person name="Birtle Z."/>
            <person name="Marques A.C."/>
            <person name="Graves T."/>
            <person name="Zhou S."/>
            <person name="Teague B."/>
            <person name="Potamousis K."/>
            <person name="Churas C."/>
            <person name="Place M."/>
            <person name="Herschleb J."/>
            <person name="Runnheim R."/>
            <person name="Forrest D."/>
            <person name="Amos-Landgraf J."/>
            <person name="Schwartz D.C."/>
            <person name="Cheng Z."/>
            <person name="Lindblad-Toh K."/>
            <person name="Eichler E.E."/>
            <person name="Ponting C.P."/>
        </authorList>
    </citation>
    <scope>NUCLEOTIDE SEQUENCE [LARGE SCALE GENOMIC DNA]</scope>
    <source>
        <strain>C57BL/6J</strain>
    </source>
</reference>
<reference key="3">
    <citation type="submission" date="2005-07" db="EMBL/GenBank/DDBJ databases">
        <authorList>
            <person name="Mural R.J."/>
            <person name="Adams M.D."/>
            <person name="Myers E.W."/>
            <person name="Smith H.O."/>
            <person name="Venter J.C."/>
        </authorList>
    </citation>
    <scope>NUCLEOTIDE SEQUENCE [LARGE SCALE GENOMIC DNA]</scope>
</reference>
<reference key="4">
    <citation type="journal article" date="2004" name="Genome Res.">
        <title>The status, quality, and expansion of the NIH full-length cDNA project: the Mammalian Gene Collection (MGC).</title>
        <authorList>
            <consortium name="The MGC Project Team"/>
        </authorList>
    </citation>
    <scope>NUCLEOTIDE SEQUENCE [LARGE SCALE MRNA]</scope>
    <source>
        <strain>C57BL/6J</strain>
        <tissue>Brain</tissue>
        <tissue>Eye</tissue>
    </source>
</reference>
<accession>Q8BUH1</accession>
<accession>Q52KF0</accession>
<dbReference type="EMBL" id="AK085226">
    <property type="protein sequence ID" value="BAC39394.1"/>
    <property type="molecule type" value="mRNA"/>
</dbReference>
<dbReference type="EMBL" id="AC125162">
    <property type="status" value="NOT_ANNOTATED_CDS"/>
    <property type="molecule type" value="Genomic_DNA"/>
</dbReference>
<dbReference type="EMBL" id="CH466525">
    <property type="protein sequence ID" value="EDL11422.1"/>
    <property type="molecule type" value="Genomic_DNA"/>
</dbReference>
<dbReference type="EMBL" id="BC094379">
    <property type="protein sequence ID" value="AAH94379.1"/>
    <property type="molecule type" value="mRNA"/>
</dbReference>
<dbReference type="EMBL" id="BC132373">
    <property type="protein sequence ID" value="AAI32374.1"/>
    <property type="molecule type" value="mRNA"/>
</dbReference>
<dbReference type="EMBL" id="BC138333">
    <property type="protein sequence ID" value="AAI38334.1"/>
    <property type="molecule type" value="mRNA"/>
</dbReference>
<dbReference type="CCDS" id="CCDS40469.1"/>
<dbReference type="RefSeq" id="NP_783577.2">
    <property type="nucleotide sequence ID" value="NM_175646.4"/>
</dbReference>
<dbReference type="SMR" id="Q8BUH1"/>
<dbReference type="BioGRID" id="231565">
    <property type="interactions" value="1"/>
</dbReference>
<dbReference type="FunCoup" id="Q8BUH1">
    <property type="interactions" value="1844"/>
</dbReference>
<dbReference type="STRING" id="10090.ENSMUSP00000034159"/>
<dbReference type="iPTMnet" id="Q8BUH1"/>
<dbReference type="PhosphoSitePlus" id="Q8BUH1"/>
<dbReference type="PaxDb" id="10090-ENSMUSP00000034159"/>
<dbReference type="ProteomicsDB" id="298073"/>
<dbReference type="Pumba" id="Q8BUH1"/>
<dbReference type="Antibodypedia" id="30184">
    <property type="antibodies" value="95 antibodies from 23 providers"/>
</dbReference>
<dbReference type="Ensembl" id="ENSMUST00000034159.8">
    <property type="protein sequence ID" value="ENSMUSP00000034159.2"/>
    <property type="gene ID" value="ENSMUSG00000031723.9"/>
</dbReference>
<dbReference type="Ensembl" id="ENSMUST00000178445.2">
    <property type="protein sequence ID" value="ENSMUSP00000137524.2"/>
    <property type="gene ID" value="ENSMUSG00000031723.9"/>
</dbReference>
<dbReference type="GeneID" id="234723"/>
<dbReference type="KEGG" id="mmu:234723"/>
<dbReference type="UCSC" id="uc012gkh.1">
    <property type="organism name" value="mouse"/>
</dbReference>
<dbReference type="AGR" id="MGI:2443724"/>
<dbReference type="CTD" id="54957"/>
<dbReference type="MGI" id="MGI:2443724">
    <property type="gene designation" value="Txnl4b"/>
</dbReference>
<dbReference type="VEuPathDB" id="HostDB:ENSMUSG00000031723"/>
<dbReference type="eggNOG" id="KOG3414">
    <property type="taxonomic scope" value="Eukaryota"/>
</dbReference>
<dbReference type="GeneTree" id="ENSGT00390000010779"/>
<dbReference type="HOGENOM" id="CLU_117348_1_0_1"/>
<dbReference type="InParanoid" id="Q8BUH1"/>
<dbReference type="OMA" id="NIPKYEL"/>
<dbReference type="OrthoDB" id="147752at2759"/>
<dbReference type="PhylomeDB" id="Q8BUH1"/>
<dbReference type="TreeFam" id="TF332397"/>
<dbReference type="BioGRID-ORCS" id="234723">
    <property type="hits" value="28 hits in 110 CRISPR screens"/>
</dbReference>
<dbReference type="PRO" id="PR:Q8BUH1"/>
<dbReference type="Proteomes" id="UP000000589">
    <property type="component" value="Chromosome 8"/>
</dbReference>
<dbReference type="RNAct" id="Q8BUH1">
    <property type="molecule type" value="protein"/>
</dbReference>
<dbReference type="Bgee" id="ENSMUSG00000031723">
    <property type="expression patterns" value="Expressed in granulocyte and 215 other cell types or tissues"/>
</dbReference>
<dbReference type="GO" id="GO:0005829">
    <property type="term" value="C:cytosol"/>
    <property type="evidence" value="ECO:0007669"/>
    <property type="project" value="Ensembl"/>
</dbReference>
<dbReference type="GO" id="GO:0005654">
    <property type="term" value="C:nucleoplasm"/>
    <property type="evidence" value="ECO:0007669"/>
    <property type="project" value="Ensembl"/>
</dbReference>
<dbReference type="GO" id="GO:0005634">
    <property type="term" value="C:nucleus"/>
    <property type="evidence" value="ECO:0000266"/>
    <property type="project" value="MGI"/>
</dbReference>
<dbReference type="GO" id="GO:0046540">
    <property type="term" value="C:U4/U6 x U5 tri-snRNP complex"/>
    <property type="evidence" value="ECO:0007669"/>
    <property type="project" value="InterPro"/>
</dbReference>
<dbReference type="GO" id="GO:0000398">
    <property type="term" value="P:mRNA splicing, via spliceosome"/>
    <property type="evidence" value="ECO:0000266"/>
    <property type="project" value="MGI"/>
</dbReference>
<dbReference type="GO" id="GO:0008284">
    <property type="term" value="P:positive regulation of cell population proliferation"/>
    <property type="evidence" value="ECO:0000266"/>
    <property type="project" value="MGI"/>
</dbReference>
<dbReference type="CDD" id="cd02986">
    <property type="entry name" value="DLP"/>
    <property type="match status" value="1"/>
</dbReference>
<dbReference type="FunFam" id="3.40.30.10:FF:000059">
    <property type="entry name" value="Thioredoxin-like protein"/>
    <property type="match status" value="1"/>
</dbReference>
<dbReference type="Gene3D" id="3.40.30.10">
    <property type="entry name" value="Glutaredoxin"/>
    <property type="match status" value="1"/>
</dbReference>
<dbReference type="InterPro" id="IPR004123">
    <property type="entry name" value="Dim1"/>
</dbReference>
<dbReference type="InterPro" id="IPR036249">
    <property type="entry name" value="Thioredoxin-like_sf"/>
</dbReference>
<dbReference type="PANTHER" id="PTHR12052:SF4">
    <property type="entry name" value="THIOREDOXIN-LIKE PROTEIN 4B"/>
    <property type="match status" value="1"/>
</dbReference>
<dbReference type="PANTHER" id="PTHR12052">
    <property type="entry name" value="THIOREDOXIN-LIKE PROTEN 4A, 4B"/>
    <property type="match status" value="1"/>
</dbReference>
<dbReference type="Pfam" id="PF02966">
    <property type="entry name" value="DIM1"/>
    <property type="match status" value="1"/>
</dbReference>
<dbReference type="PIRSF" id="PIRSF017199">
    <property type="entry name" value="mRNA_splic_U5"/>
    <property type="match status" value="1"/>
</dbReference>
<dbReference type="SMART" id="SM01410">
    <property type="entry name" value="DIM1"/>
    <property type="match status" value="1"/>
</dbReference>
<dbReference type="SUPFAM" id="SSF52833">
    <property type="entry name" value="Thioredoxin-like"/>
    <property type="match status" value="1"/>
</dbReference>
<feature type="chain" id="PRO_0000218290" description="Thioredoxin-like protein 4B">
    <location>
        <begin position="1"/>
        <end position="149"/>
    </location>
</feature>
<feature type="sequence conflict" description="In Ref. 1; BAC39394." evidence="2" ref="1">
    <original>V</original>
    <variation>G</variation>
    <location>
        <position position="25"/>
    </location>
</feature>
<feature type="sequence conflict" description="In Ref. 1; BAC39394." evidence="2" ref="1">
    <original>V</original>
    <variation>G</variation>
    <location>
        <position position="61"/>
    </location>
</feature>
<feature type="sequence conflict" description="In Ref. 1; BAC39394." evidence="2" ref="1">
    <original>V</original>
    <variation>G</variation>
    <location>
        <position position="92"/>
    </location>
</feature>
<gene>
    <name type="primary">Txnl4b</name>
</gene>
<sequence>MSFLLPKLTSKKEVDQAIKSTAEKVLVLRFGRDEDPVCLQLDDILSKTSADLSKMAAIYLVDVDHTPVYTQYFDISYIPSTVFFFNGQHMKVDYGSPDHTKFVGSFKTKQDFIDLIEVIYRGAMRGKLIVQSPIDPKNVPKYDLLYQDI</sequence>
<keyword id="KW-0131">Cell cycle</keyword>
<keyword id="KW-0507">mRNA processing</keyword>
<keyword id="KW-0508">mRNA splicing</keyword>
<keyword id="KW-0539">Nucleus</keyword>
<keyword id="KW-1185">Reference proteome</keyword>
<comment type="function">
    <text evidence="1">Essential role in pre-mRNA splicing. Required in cell cycle progression for S/G(2) transition (By similarity).</text>
</comment>
<comment type="subunit">
    <text evidence="1">Homodimer. Interacts with the U5-102 kDa protein subunit of the spliceosome (By similarity).</text>
</comment>
<comment type="subcellular location">
    <subcellularLocation>
        <location evidence="1">Nucleus</location>
    </subcellularLocation>
</comment>
<comment type="similarity">
    <text evidence="2">Belongs to the DIM1 family.</text>
</comment>
<protein>
    <recommendedName>
        <fullName>Thioredoxin-like protein 4B</fullName>
    </recommendedName>
</protein>
<name>TXN4B_MOUSE</name>
<organism>
    <name type="scientific">Mus musculus</name>
    <name type="common">Mouse</name>
    <dbReference type="NCBI Taxonomy" id="10090"/>
    <lineage>
        <taxon>Eukaryota</taxon>
        <taxon>Metazoa</taxon>
        <taxon>Chordata</taxon>
        <taxon>Craniata</taxon>
        <taxon>Vertebrata</taxon>
        <taxon>Euteleostomi</taxon>
        <taxon>Mammalia</taxon>
        <taxon>Eutheria</taxon>
        <taxon>Euarchontoglires</taxon>
        <taxon>Glires</taxon>
        <taxon>Rodentia</taxon>
        <taxon>Myomorpha</taxon>
        <taxon>Muroidea</taxon>
        <taxon>Muridae</taxon>
        <taxon>Murinae</taxon>
        <taxon>Mus</taxon>
        <taxon>Mus</taxon>
    </lineage>
</organism>